<dbReference type="EC" id="4.3.2.10" evidence="1"/>
<dbReference type="EMBL" id="CP000016">
    <property type="protein sequence ID" value="AAZ41098.1"/>
    <property type="molecule type" value="Genomic_DNA"/>
</dbReference>
<dbReference type="RefSeq" id="WP_011283009.1">
    <property type="nucleotide sequence ID" value="NC_007292.1"/>
</dbReference>
<dbReference type="SMR" id="Q494D6"/>
<dbReference type="STRING" id="291272.BPEN_483"/>
<dbReference type="KEGG" id="bpn:BPEN_483"/>
<dbReference type="eggNOG" id="COG0107">
    <property type="taxonomic scope" value="Bacteria"/>
</dbReference>
<dbReference type="HOGENOM" id="CLU_048577_4_0_6"/>
<dbReference type="OrthoDB" id="9781903at2"/>
<dbReference type="UniPathway" id="UPA00031">
    <property type="reaction ID" value="UER00010"/>
</dbReference>
<dbReference type="Proteomes" id="UP000007794">
    <property type="component" value="Chromosome"/>
</dbReference>
<dbReference type="GO" id="GO:0005737">
    <property type="term" value="C:cytoplasm"/>
    <property type="evidence" value="ECO:0007669"/>
    <property type="project" value="UniProtKB-SubCell"/>
</dbReference>
<dbReference type="GO" id="GO:0000107">
    <property type="term" value="F:imidazoleglycerol-phosphate synthase activity"/>
    <property type="evidence" value="ECO:0007669"/>
    <property type="project" value="UniProtKB-UniRule"/>
</dbReference>
<dbReference type="GO" id="GO:0016829">
    <property type="term" value="F:lyase activity"/>
    <property type="evidence" value="ECO:0007669"/>
    <property type="project" value="UniProtKB-KW"/>
</dbReference>
<dbReference type="GO" id="GO:0000105">
    <property type="term" value="P:L-histidine biosynthetic process"/>
    <property type="evidence" value="ECO:0007669"/>
    <property type="project" value="UniProtKB-UniRule"/>
</dbReference>
<dbReference type="CDD" id="cd04731">
    <property type="entry name" value="HisF"/>
    <property type="match status" value="1"/>
</dbReference>
<dbReference type="FunFam" id="3.20.20.70:FF:000006">
    <property type="entry name" value="Imidazole glycerol phosphate synthase subunit HisF"/>
    <property type="match status" value="1"/>
</dbReference>
<dbReference type="Gene3D" id="3.20.20.70">
    <property type="entry name" value="Aldolase class I"/>
    <property type="match status" value="1"/>
</dbReference>
<dbReference type="HAMAP" id="MF_01013">
    <property type="entry name" value="HisF"/>
    <property type="match status" value="1"/>
</dbReference>
<dbReference type="InterPro" id="IPR013785">
    <property type="entry name" value="Aldolase_TIM"/>
</dbReference>
<dbReference type="InterPro" id="IPR006062">
    <property type="entry name" value="His_biosynth"/>
</dbReference>
<dbReference type="InterPro" id="IPR004651">
    <property type="entry name" value="HisF"/>
</dbReference>
<dbReference type="InterPro" id="IPR050064">
    <property type="entry name" value="IGPS_HisA/HisF"/>
</dbReference>
<dbReference type="InterPro" id="IPR011060">
    <property type="entry name" value="RibuloseP-bd_barrel"/>
</dbReference>
<dbReference type="NCBIfam" id="TIGR00735">
    <property type="entry name" value="hisF"/>
    <property type="match status" value="1"/>
</dbReference>
<dbReference type="PANTHER" id="PTHR21235:SF2">
    <property type="entry name" value="IMIDAZOLE GLYCEROL PHOSPHATE SYNTHASE HISHF"/>
    <property type="match status" value="1"/>
</dbReference>
<dbReference type="PANTHER" id="PTHR21235">
    <property type="entry name" value="IMIDAZOLE GLYCEROL PHOSPHATE SYNTHASE SUBUNIT HISF/H IGP SYNTHASE SUBUNIT HISF/H"/>
    <property type="match status" value="1"/>
</dbReference>
<dbReference type="Pfam" id="PF00977">
    <property type="entry name" value="His_biosynth"/>
    <property type="match status" value="1"/>
</dbReference>
<dbReference type="SUPFAM" id="SSF51366">
    <property type="entry name" value="Ribulose-phoshate binding barrel"/>
    <property type="match status" value="1"/>
</dbReference>
<sequence length="258" mass="28757">MLAKRIIPCLDVGNNKVIKGIQFKDHKIVGDILELANRYAKSGADELVFYDITASPNDQVVNKRWISQIAKVINIPFCVAGGINTLKQAKQILASGADKISINSPALINPMLIQELADHLGTQCVVVSIDTWHNPQKKIYQVKCYTGDSTRAKITTWQTLDWVKKVQEYGAGEIVLNMMNQDGMKNGYDLDQLRNIRKHCQVPLIASGGAGTYQHFLEAFRDADVDGALAASVFHNQIIDIHKLKQFLNKEGIKIRLC</sequence>
<keyword id="KW-0028">Amino-acid biosynthesis</keyword>
<keyword id="KW-0963">Cytoplasm</keyword>
<keyword id="KW-0368">Histidine biosynthesis</keyword>
<keyword id="KW-0456">Lyase</keyword>
<keyword id="KW-1185">Reference proteome</keyword>
<evidence type="ECO:0000255" key="1">
    <source>
        <dbReference type="HAMAP-Rule" id="MF_01013"/>
    </source>
</evidence>
<comment type="function">
    <text evidence="1">IGPS catalyzes the conversion of PRFAR and glutamine to IGP, AICAR and glutamate. The HisF subunit catalyzes the cyclization activity that produces IGP and AICAR from PRFAR using the ammonia provided by the HisH subunit.</text>
</comment>
<comment type="catalytic activity">
    <reaction evidence="1">
        <text>5-[(5-phospho-1-deoxy-D-ribulos-1-ylimino)methylamino]-1-(5-phospho-beta-D-ribosyl)imidazole-4-carboxamide + L-glutamine = D-erythro-1-(imidazol-4-yl)glycerol 3-phosphate + 5-amino-1-(5-phospho-beta-D-ribosyl)imidazole-4-carboxamide + L-glutamate + H(+)</text>
        <dbReference type="Rhea" id="RHEA:24793"/>
        <dbReference type="ChEBI" id="CHEBI:15378"/>
        <dbReference type="ChEBI" id="CHEBI:29985"/>
        <dbReference type="ChEBI" id="CHEBI:58278"/>
        <dbReference type="ChEBI" id="CHEBI:58359"/>
        <dbReference type="ChEBI" id="CHEBI:58475"/>
        <dbReference type="ChEBI" id="CHEBI:58525"/>
        <dbReference type="EC" id="4.3.2.10"/>
    </reaction>
</comment>
<comment type="pathway">
    <text evidence="1">Amino-acid biosynthesis; L-histidine biosynthesis; L-histidine from 5-phospho-alpha-D-ribose 1-diphosphate: step 5/9.</text>
</comment>
<comment type="subunit">
    <text evidence="1">Heterodimer of HisH and HisF.</text>
</comment>
<comment type="subcellular location">
    <subcellularLocation>
        <location evidence="1">Cytoplasm</location>
    </subcellularLocation>
</comment>
<comment type="similarity">
    <text evidence="1">Belongs to the HisA/HisF family.</text>
</comment>
<reference key="1">
    <citation type="journal article" date="2005" name="Genome Res.">
        <title>Genome sequence of Blochmannia pennsylvanicus indicates parallel evolutionary trends among bacterial mutualists of insects.</title>
        <authorList>
            <person name="Degnan P.H."/>
            <person name="Lazarus A.B."/>
            <person name="Wernegreen J.J."/>
        </authorList>
    </citation>
    <scope>NUCLEOTIDE SEQUENCE [LARGE SCALE GENOMIC DNA]</scope>
    <source>
        <strain>BPEN</strain>
    </source>
</reference>
<protein>
    <recommendedName>
        <fullName evidence="1">Imidazole glycerol phosphate synthase subunit HisF</fullName>
        <ecNumber evidence="1">4.3.2.10</ecNumber>
    </recommendedName>
    <alternativeName>
        <fullName evidence="1">IGP synthase cyclase subunit</fullName>
    </alternativeName>
    <alternativeName>
        <fullName evidence="1">IGP synthase subunit HisF</fullName>
    </alternativeName>
    <alternativeName>
        <fullName evidence="1">ImGP synthase subunit HisF</fullName>
        <shortName evidence="1">IGPS subunit HisF</shortName>
    </alternativeName>
</protein>
<name>HIS6_BLOPB</name>
<gene>
    <name evidence="1" type="primary">hisF</name>
    <name type="ordered locus">BPEN_483</name>
</gene>
<feature type="chain" id="PRO_0000142125" description="Imidazole glycerol phosphate synthase subunit HisF">
    <location>
        <begin position="1"/>
        <end position="258"/>
    </location>
</feature>
<feature type="active site" evidence="1">
    <location>
        <position position="11"/>
    </location>
</feature>
<feature type="active site" evidence="1">
    <location>
        <position position="130"/>
    </location>
</feature>
<accession>Q494D6</accession>
<organism>
    <name type="scientific">Blochmanniella pennsylvanica (strain BPEN)</name>
    <dbReference type="NCBI Taxonomy" id="291272"/>
    <lineage>
        <taxon>Bacteria</taxon>
        <taxon>Pseudomonadati</taxon>
        <taxon>Pseudomonadota</taxon>
        <taxon>Gammaproteobacteria</taxon>
        <taxon>Enterobacterales</taxon>
        <taxon>Enterobacteriaceae</taxon>
        <taxon>ant endosymbionts</taxon>
        <taxon>Candidatus Blochmanniella</taxon>
    </lineage>
</organism>
<proteinExistence type="inferred from homology"/>